<proteinExistence type="inferred from homology"/>
<protein>
    <recommendedName>
        <fullName evidence="1">Xanthine-guanine phosphoribosyltransferase</fullName>
        <shortName evidence="1">XGPRT</shortName>
        <ecNumber evidence="1">2.4.2.-</ecNumber>
        <ecNumber evidence="1">2.4.2.22</ecNumber>
    </recommendedName>
    <alternativeName>
        <fullName evidence="1">Xanthine phosphoribosyltransferase</fullName>
    </alternativeName>
</protein>
<name>XGPT_BUCBP</name>
<keyword id="KW-1003">Cell membrane</keyword>
<keyword id="KW-0328">Glycosyltransferase</keyword>
<keyword id="KW-0460">Magnesium</keyword>
<keyword id="KW-0472">Membrane</keyword>
<keyword id="KW-0479">Metal-binding</keyword>
<keyword id="KW-0660">Purine salvage</keyword>
<keyword id="KW-1185">Reference proteome</keyword>
<keyword id="KW-0808">Transferase</keyword>
<organism>
    <name type="scientific">Buchnera aphidicola subsp. Baizongia pistaciae (strain Bp)</name>
    <dbReference type="NCBI Taxonomy" id="224915"/>
    <lineage>
        <taxon>Bacteria</taxon>
        <taxon>Pseudomonadati</taxon>
        <taxon>Pseudomonadota</taxon>
        <taxon>Gammaproteobacteria</taxon>
        <taxon>Enterobacterales</taxon>
        <taxon>Erwiniaceae</taxon>
        <taxon>Buchnera</taxon>
    </lineage>
</organism>
<gene>
    <name evidence="1" type="primary">gpt</name>
    <name type="ordered locus">bbp_232</name>
</gene>
<dbReference type="EC" id="2.4.2.-" evidence="1"/>
<dbReference type="EC" id="2.4.2.22" evidence="1"/>
<dbReference type="EMBL" id="AE016826">
    <property type="protein sequence ID" value="AAO26959.1"/>
    <property type="molecule type" value="Genomic_DNA"/>
</dbReference>
<dbReference type="RefSeq" id="WP_011091360.1">
    <property type="nucleotide sequence ID" value="NC_004545.1"/>
</dbReference>
<dbReference type="SMR" id="Q89AN2"/>
<dbReference type="STRING" id="224915.bbp_232"/>
<dbReference type="KEGG" id="bab:bbp_232"/>
<dbReference type="eggNOG" id="COG2236">
    <property type="taxonomic scope" value="Bacteria"/>
</dbReference>
<dbReference type="HOGENOM" id="CLU_080904_3_0_6"/>
<dbReference type="OrthoDB" id="9789690at2"/>
<dbReference type="UniPathway" id="UPA00602">
    <property type="reaction ID" value="UER00658"/>
</dbReference>
<dbReference type="UniPathway" id="UPA00909">
    <property type="reaction ID" value="UER00887"/>
</dbReference>
<dbReference type="Proteomes" id="UP000000601">
    <property type="component" value="Chromosome"/>
</dbReference>
<dbReference type="GO" id="GO:0005829">
    <property type="term" value="C:cytosol"/>
    <property type="evidence" value="ECO:0007669"/>
    <property type="project" value="TreeGrafter"/>
</dbReference>
<dbReference type="GO" id="GO:0005886">
    <property type="term" value="C:plasma membrane"/>
    <property type="evidence" value="ECO:0007669"/>
    <property type="project" value="UniProtKB-SubCell"/>
</dbReference>
<dbReference type="GO" id="GO:0052657">
    <property type="term" value="F:guanine phosphoribosyltransferase activity"/>
    <property type="evidence" value="ECO:0007669"/>
    <property type="project" value="RHEA"/>
</dbReference>
<dbReference type="GO" id="GO:0004422">
    <property type="term" value="F:hypoxanthine phosphoribosyltransferase activity"/>
    <property type="evidence" value="ECO:0007669"/>
    <property type="project" value="TreeGrafter"/>
</dbReference>
<dbReference type="GO" id="GO:0000287">
    <property type="term" value="F:magnesium ion binding"/>
    <property type="evidence" value="ECO:0007669"/>
    <property type="project" value="UniProtKB-UniRule"/>
</dbReference>
<dbReference type="GO" id="GO:0000310">
    <property type="term" value="F:xanthine phosphoribosyltransferase activity"/>
    <property type="evidence" value="ECO:0007669"/>
    <property type="project" value="UniProtKB-UniRule"/>
</dbReference>
<dbReference type="GO" id="GO:0032263">
    <property type="term" value="P:GMP salvage"/>
    <property type="evidence" value="ECO:0007669"/>
    <property type="project" value="UniProtKB-UniRule"/>
</dbReference>
<dbReference type="GO" id="GO:0032264">
    <property type="term" value="P:IMP salvage"/>
    <property type="evidence" value="ECO:0007669"/>
    <property type="project" value="TreeGrafter"/>
</dbReference>
<dbReference type="GO" id="GO:0006166">
    <property type="term" value="P:purine ribonucleoside salvage"/>
    <property type="evidence" value="ECO:0007669"/>
    <property type="project" value="UniProtKB-KW"/>
</dbReference>
<dbReference type="GO" id="GO:0032265">
    <property type="term" value="P:XMP salvage"/>
    <property type="evidence" value="ECO:0007669"/>
    <property type="project" value="UniProtKB-UniRule"/>
</dbReference>
<dbReference type="CDD" id="cd06223">
    <property type="entry name" value="PRTases_typeI"/>
    <property type="match status" value="1"/>
</dbReference>
<dbReference type="Gene3D" id="3.40.50.2020">
    <property type="match status" value="1"/>
</dbReference>
<dbReference type="HAMAP" id="MF_01903">
    <property type="entry name" value="XGPRT"/>
    <property type="match status" value="1"/>
</dbReference>
<dbReference type="InterPro" id="IPR000836">
    <property type="entry name" value="PRibTrfase_dom"/>
</dbReference>
<dbReference type="InterPro" id="IPR029057">
    <property type="entry name" value="PRTase-like"/>
</dbReference>
<dbReference type="InterPro" id="IPR023747">
    <property type="entry name" value="Xanthine_Guanine_PRibTrfase"/>
</dbReference>
<dbReference type="NCBIfam" id="NF006613">
    <property type="entry name" value="PRK09177.1"/>
    <property type="match status" value="1"/>
</dbReference>
<dbReference type="PANTHER" id="PTHR39563">
    <property type="entry name" value="XANTHINE PHOSPHORIBOSYLTRANSFERASE"/>
    <property type="match status" value="1"/>
</dbReference>
<dbReference type="PANTHER" id="PTHR39563:SF1">
    <property type="entry name" value="XANTHINE-GUANINE PHOSPHORIBOSYLTRANSFERASE"/>
    <property type="match status" value="1"/>
</dbReference>
<dbReference type="Pfam" id="PF00156">
    <property type="entry name" value="Pribosyltran"/>
    <property type="match status" value="1"/>
</dbReference>
<dbReference type="SUPFAM" id="SSF53271">
    <property type="entry name" value="PRTase-like"/>
    <property type="match status" value="1"/>
</dbReference>
<dbReference type="PROSITE" id="PS00103">
    <property type="entry name" value="PUR_PYR_PR_TRANSFER"/>
    <property type="match status" value="1"/>
</dbReference>
<sequence length="153" mass="17436">MSKKYIVTWDMLQIYARELAQKLLPVNQWKGIIAVSRGGLIPSALLARELNIRFVDTICVSSYDHNRLRDLKILKYAAGNSSQIIIVDDLVDTGGTGKIIRNLYPKAKFVTIFAKPMGKLLVDEYIIDIPQKVWIEQPWDMGVTYQSPLVRDL</sequence>
<comment type="function">
    <text evidence="1">Purine salvage pathway enzyme that catalyzes the transfer of the ribosyl-5-phosphate group from 5-phospho-alpha-D-ribose 1-diphosphate (PRPP) to the N9 position of the 6-oxopurines guanine and xanthine to form the corresponding ribonucleotides GMP (guanosine 5'-monophosphate) and XMP (xanthosine 5'-monophosphate), with the release of PPi. To a lesser extent, also acts on hypoxanthine.</text>
</comment>
<comment type="catalytic activity">
    <reaction evidence="1">
        <text>GMP + diphosphate = guanine + 5-phospho-alpha-D-ribose 1-diphosphate</text>
        <dbReference type="Rhea" id="RHEA:25424"/>
        <dbReference type="ChEBI" id="CHEBI:16235"/>
        <dbReference type="ChEBI" id="CHEBI:33019"/>
        <dbReference type="ChEBI" id="CHEBI:58017"/>
        <dbReference type="ChEBI" id="CHEBI:58115"/>
    </reaction>
    <physiologicalReaction direction="right-to-left" evidence="1">
        <dbReference type="Rhea" id="RHEA:25426"/>
    </physiologicalReaction>
</comment>
<comment type="catalytic activity">
    <reaction evidence="1">
        <text>XMP + diphosphate = xanthine + 5-phospho-alpha-D-ribose 1-diphosphate</text>
        <dbReference type="Rhea" id="RHEA:10800"/>
        <dbReference type="ChEBI" id="CHEBI:17712"/>
        <dbReference type="ChEBI" id="CHEBI:33019"/>
        <dbReference type="ChEBI" id="CHEBI:57464"/>
        <dbReference type="ChEBI" id="CHEBI:58017"/>
        <dbReference type="EC" id="2.4.2.22"/>
    </reaction>
    <physiologicalReaction direction="right-to-left" evidence="1">
        <dbReference type="Rhea" id="RHEA:10802"/>
    </physiologicalReaction>
</comment>
<comment type="catalytic activity">
    <reaction evidence="1">
        <text>IMP + diphosphate = hypoxanthine + 5-phospho-alpha-D-ribose 1-diphosphate</text>
        <dbReference type="Rhea" id="RHEA:17973"/>
        <dbReference type="ChEBI" id="CHEBI:17368"/>
        <dbReference type="ChEBI" id="CHEBI:33019"/>
        <dbReference type="ChEBI" id="CHEBI:58017"/>
        <dbReference type="ChEBI" id="CHEBI:58053"/>
    </reaction>
    <physiologicalReaction direction="right-to-left" evidence="1">
        <dbReference type="Rhea" id="RHEA:17975"/>
    </physiologicalReaction>
</comment>
<comment type="cofactor">
    <cofactor evidence="1">
        <name>Mg(2+)</name>
        <dbReference type="ChEBI" id="CHEBI:18420"/>
    </cofactor>
</comment>
<comment type="pathway">
    <text evidence="1">Purine metabolism; GMP biosynthesis via salvage pathway; GMP from guanine: step 1/1.</text>
</comment>
<comment type="pathway">
    <text evidence="1">Purine metabolism; XMP biosynthesis via salvage pathway; XMP from xanthine: step 1/1.</text>
</comment>
<comment type="subunit">
    <text evidence="1">Homotetramer.</text>
</comment>
<comment type="subcellular location">
    <subcellularLocation>
        <location evidence="1">Cell membrane</location>
        <topology evidence="1">Peripheral membrane protein</topology>
    </subcellularLocation>
</comment>
<comment type="similarity">
    <text evidence="1">Belongs to the purine/pyrimidine phosphoribosyltransferase family. XGPT subfamily.</text>
</comment>
<reference key="1">
    <citation type="journal article" date="2003" name="Proc. Natl. Acad. Sci. U.S.A.">
        <title>Reductive genome evolution in Buchnera aphidicola.</title>
        <authorList>
            <person name="van Ham R.C.H.J."/>
            <person name="Kamerbeek J."/>
            <person name="Palacios C."/>
            <person name="Rausell C."/>
            <person name="Abascal F."/>
            <person name="Bastolla U."/>
            <person name="Fernandez J.M."/>
            <person name="Jimenez L."/>
            <person name="Postigo M."/>
            <person name="Silva F.J."/>
            <person name="Tamames J."/>
            <person name="Viguera E."/>
            <person name="Latorre A."/>
            <person name="Valencia A."/>
            <person name="Moran F."/>
            <person name="Moya A."/>
        </authorList>
    </citation>
    <scope>NUCLEOTIDE SEQUENCE [LARGE SCALE GENOMIC DNA]</scope>
    <source>
        <strain>Bp</strain>
    </source>
</reference>
<feature type="chain" id="PRO_0000139661" description="Xanthine-guanine phosphoribosyltransferase">
    <location>
        <begin position="1"/>
        <end position="153"/>
    </location>
</feature>
<feature type="binding site" evidence="1">
    <location>
        <begin position="37"/>
        <end position="38"/>
    </location>
    <ligand>
        <name>5-phospho-alpha-D-ribose 1-diphosphate</name>
        <dbReference type="ChEBI" id="CHEBI:58017"/>
    </ligand>
</feature>
<feature type="binding site" evidence="1">
    <location>
        <position position="69"/>
    </location>
    <ligand>
        <name>5-phospho-alpha-D-ribose 1-diphosphate</name>
        <dbReference type="ChEBI" id="CHEBI:58017"/>
    </ligand>
</feature>
<feature type="binding site" evidence="1">
    <location>
        <position position="69"/>
    </location>
    <ligand>
        <name>GMP</name>
        <dbReference type="ChEBI" id="CHEBI:58115"/>
    </ligand>
</feature>
<feature type="binding site" evidence="1">
    <location>
        <begin position="88"/>
        <end position="96"/>
    </location>
    <ligand>
        <name>5-phospho-alpha-D-ribose 1-diphosphate</name>
        <dbReference type="ChEBI" id="CHEBI:58017"/>
    </ligand>
</feature>
<feature type="binding site" evidence="1">
    <location>
        <position position="89"/>
    </location>
    <ligand>
        <name>Mg(2+)</name>
        <dbReference type="ChEBI" id="CHEBI:18420"/>
    </ligand>
</feature>
<feature type="binding site" evidence="1">
    <location>
        <begin position="92"/>
        <end position="96"/>
    </location>
    <ligand>
        <name>GMP</name>
        <dbReference type="ChEBI" id="CHEBI:58115"/>
    </ligand>
</feature>
<feature type="binding site" evidence="1">
    <location>
        <position position="92"/>
    </location>
    <ligand>
        <name>guanine</name>
        <dbReference type="ChEBI" id="CHEBI:16235"/>
    </ligand>
</feature>
<feature type="binding site" evidence="1">
    <location>
        <position position="92"/>
    </location>
    <ligand>
        <name>xanthine</name>
        <dbReference type="ChEBI" id="CHEBI:17712"/>
    </ligand>
</feature>
<feature type="binding site" evidence="1">
    <location>
        <begin position="134"/>
        <end position="135"/>
    </location>
    <ligand>
        <name>GMP</name>
        <dbReference type="ChEBI" id="CHEBI:58115"/>
    </ligand>
</feature>
<feature type="binding site" evidence="1">
    <location>
        <position position="135"/>
    </location>
    <ligand>
        <name>guanine</name>
        <dbReference type="ChEBI" id="CHEBI:16235"/>
    </ligand>
</feature>
<feature type="binding site" evidence="1">
    <location>
        <position position="135"/>
    </location>
    <ligand>
        <name>xanthine</name>
        <dbReference type="ChEBI" id="CHEBI:17712"/>
    </ligand>
</feature>
<evidence type="ECO:0000255" key="1">
    <source>
        <dbReference type="HAMAP-Rule" id="MF_01903"/>
    </source>
</evidence>
<accession>Q89AN2</accession>